<reference key="1">
    <citation type="journal article" date="2010" name="PLoS ONE">
        <title>The complete genome sequence of Cupriavidus metallidurans strain CH34, a master survivalist in harsh and anthropogenic environments.</title>
        <authorList>
            <person name="Janssen P.J."/>
            <person name="Van Houdt R."/>
            <person name="Moors H."/>
            <person name="Monsieurs P."/>
            <person name="Morin N."/>
            <person name="Michaux A."/>
            <person name="Benotmane M.A."/>
            <person name="Leys N."/>
            <person name="Vallaeys T."/>
            <person name="Lapidus A."/>
            <person name="Monchy S."/>
            <person name="Medigue C."/>
            <person name="Taghavi S."/>
            <person name="McCorkle S."/>
            <person name="Dunn J."/>
            <person name="van der Lelie D."/>
            <person name="Mergeay M."/>
        </authorList>
    </citation>
    <scope>NUCLEOTIDE SEQUENCE [LARGE SCALE GENOMIC DNA]</scope>
    <source>
        <strain>ATCC 43123 / DSM 2839 / NBRC 102507 / CH34</strain>
    </source>
</reference>
<keyword id="KW-1185">Reference proteome</keyword>
<keyword id="KW-0687">Ribonucleoprotein</keyword>
<keyword id="KW-0689">Ribosomal protein</keyword>
<keyword id="KW-0694">RNA-binding</keyword>
<keyword id="KW-0699">rRNA-binding</keyword>
<evidence type="ECO:0000255" key="1">
    <source>
        <dbReference type="HAMAP-Rule" id="MF_01306"/>
    </source>
</evidence>
<evidence type="ECO:0000256" key="2">
    <source>
        <dbReference type="SAM" id="MobiDB-lite"/>
    </source>
</evidence>
<evidence type="ECO:0000305" key="3"/>
<feature type="chain" id="PRO_0000293347" description="Small ribosomal subunit protein uS4">
    <location>
        <begin position="1"/>
        <end position="207"/>
    </location>
</feature>
<feature type="domain" description="S4 RNA-binding" evidence="1">
    <location>
        <begin position="97"/>
        <end position="160"/>
    </location>
</feature>
<feature type="region of interest" description="Disordered" evidence="2">
    <location>
        <begin position="31"/>
        <end position="54"/>
    </location>
</feature>
<feature type="compositionally biased region" description="Polar residues" evidence="2">
    <location>
        <begin position="42"/>
        <end position="53"/>
    </location>
</feature>
<name>RS4_CUPMC</name>
<organism>
    <name type="scientific">Cupriavidus metallidurans (strain ATCC 43123 / DSM 2839 / NBRC 102507 / CH34)</name>
    <name type="common">Ralstonia metallidurans</name>
    <dbReference type="NCBI Taxonomy" id="266264"/>
    <lineage>
        <taxon>Bacteria</taxon>
        <taxon>Pseudomonadati</taxon>
        <taxon>Pseudomonadota</taxon>
        <taxon>Betaproteobacteria</taxon>
        <taxon>Burkholderiales</taxon>
        <taxon>Burkholderiaceae</taxon>
        <taxon>Cupriavidus</taxon>
    </lineage>
</organism>
<comment type="function">
    <text evidence="1">One of the primary rRNA binding proteins, it binds directly to 16S rRNA where it nucleates assembly of the body of the 30S subunit.</text>
</comment>
<comment type="function">
    <text evidence="1">With S5 and S12 plays an important role in translational accuracy.</text>
</comment>
<comment type="subunit">
    <text evidence="1">Part of the 30S ribosomal subunit. Contacts protein S5. The interaction surface between S4 and S5 is involved in control of translational fidelity.</text>
</comment>
<comment type="similarity">
    <text evidence="1">Belongs to the universal ribosomal protein uS4 family.</text>
</comment>
<sequence length="207" mass="23277">MARYIGPKAKLSRREGTDLFLKSARRSLADKCKLDSKPGQHGRTSGARTSDYGNQLREKQKVKRIYGVLERQFRRYFAEADRRKGNTGENLLQLLESRLDNVVYRMGFGSTRAEARQLVSHKAILVNGETLNVPSAQIKSGDIVSVREQSKKQVRIAEALSLAEQSGFPTWVAVDAKKFEGTYKQAPDRADISGDINESLIVELYSR</sequence>
<protein>
    <recommendedName>
        <fullName evidence="1">Small ribosomal subunit protein uS4</fullName>
    </recommendedName>
    <alternativeName>
        <fullName evidence="3">30S ribosomal protein S4</fullName>
    </alternativeName>
</protein>
<dbReference type="EMBL" id="CP000352">
    <property type="protein sequence ID" value="ABF10164.1"/>
    <property type="molecule type" value="Genomic_DNA"/>
</dbReference>
<dbReference type="RefSeq" id="WP_011517763.1">
    <property type="nucleotide sequence ID" value="NC_007973.1"/>
</dbReference>
<dbReference type="SMR" id="Q1LI62"/>
<dbReference type="STRING" id="266264.Rmet_3292"/>
<dbReference type="KEGG" id="rme:Rmet_3292"/>
<dbReference type="eggNOG" id="COG0522">
    <property type="taxonomic scope" value="Bacteria"/>
</dbReference>
<dbReference type="HOGENOM" id="CLU_092403_0_2_4"/>
<dbReference type="Proteomes" id="UP000002429">
    <property type="component" value="Chromosome"/>
</dbReference>
<dbReference type="GO" id="GO:0015935">
    <property type="term" value="C:small ribosomal subunit"/>
    <property type="evidence" value="ECO:0007669"/>
    <property type="project" value="InterPro"/>
</dbReference>
<dbReference type="GO" id="GO:0019843">
    <property type="term" value="F:rRNA binding"/>
    <property type="evidence" value="ECO:0007669"/>
    <property type="project" value="UniProtKB-UniRule"/>
</dbReference>
<dbReference type="GO" id="GO:0003735">
    <property type="term" value="F:structural constituent of ribosome"/>
    <property type="evidence" value="ECO:0007669"/>
    <property type="project" value="InterPro"/>
</dbReference>
<dbReference type="GO" id="GO:0042274">
    <property type="term" value="P:ribosomal small subunit biogenesis"/>
    <property type="evidence" value="ECO:0007669"/>
    <property type="project" value="TreeGrafter"/>
</dbReference>
<dbReference type="GO" id="GO:0006412">
    <property type="term" value="P:translation"/>
    <property type="evidence" value="ECO:0007669"/>
    <property type="project" value="UniProtKB-UniRule"/>
</dbReference>
<dbReference type="CDD" id="cd00165">
    <property type="entry name" value="S4"/>
    <property type="match status" value="1"/>
</dbReference>
<dbReference type="FunFam" id="1.10.1050.10:FF:000001">
    <property type="entry name" value="30S ribosomal protein S4"/>
    <property type="match status" value="1"/>
</dbReference>
<dbReference type="FunFam" id="3.10.290.10:FF:000001">
    <property type="entry name" value="30S ribosomal protein S4"/>
    <property type="match status" value="1"/>
</dbReference>
<dbReference type="Gene3D" id="1.10.1050.10">
    <property type="entry name" value="Ribosomal Protein S4 Delta 41, Chain A, domain 1"/>
    <property type="match status" value="1"/>
</dbReference>
<dbReference type="Gene3D" id="3.10.290.10">
    <property type="entry name" value="RNA-binding S4 domain"/>
    <property type="match status" value="1"/>
</dbReference>
<dbReference type="HAMAP" id="MF_01306_B">
    <property type="entry name" value="Ribosomal_uS4_B"/>
    <property type="match status" value="1"/>
</dbReference>
<dbReference type="InterPro" id="IPR022801">
    <property type="entry name" value="Ribosomal_uS4"/>
</dbReference>
<dbReference type="InterPro" id="IPR005709">
    <property type="entry name" value="Ribosomal_uS4_bac-type"/>
</dbReference>
<dbReference type="InterPro" id="IPR018079">
    <property type="entry name" value="Ribosomal_uS4_CS"/>
</dbReference>
<dbReference type="InterPro" id="IPR001912">
    <property type="entry name" value="Ribosomal_uS4_N"/>
</dbReference>
<dbReference type="InterPro" id="IPR002942">
    <property type="entry name" value="S4_RNA-bd"/>
</dbReference>
<dbReference type="InterPro" id="IPR036986">
    <property type="entry name" value="S4_RNA-bd_sf"/>
</dbReference>
<dbReference type="NCBIfam" id="NF003717">
    <property type="entry name" value="PRK05327.1"/>
    <property type="match status" value="1"/>
</dbReference>
<dbReference type="NCBIfam" id="TIGR01017">
    <property type="entry name" value="rpsD_bact"/>
    <property type="match status" value="1"/>
</dbReference>
<dbReference type="PANTHER" id="PTHR11831">
    <property type="entry name" value="30S 40S RIBOSOMAL PROTEIN"/>
    <property type="match status" value="1"/>
</dbReference>
<dbReference type="PANTHER" id="PTHR11831:SF4">
    <property type="entry name" value="SMALL RIBOSOMAL SUBUNIT PROTEIN US4M"/>
    <property type="match status" value="1"/>
</dbReference>
<dbReference type="Pfam" id="PF00163">
    <property type="entry name" value="Ribosomal_S4"/>
    <property type="match status" value="1"/>
</dbReference>
<dbReference type="Pfam" id="PF01479">
    <property type="entry name" value="S4"/>
    <property type="match status" value="1"/>
</dbReference>
<dbReference type="SMART" id="SM01390">
    <property type="entry name" value="Ribosomal_S4"/>
    <property type="match status" value="1"/>
</dbReference>
<dbReference type="SMART" id="SM00363">
    <property type="entry name" value="S4"/>
    <property type="match status" value="1"/>
</dbReference>
<dbReference type="SUPFAM" id="SSF55174">
    <property type="entry name" value="Alpha-L RNA-binding motif"/>
    <property type="match status" value="1"/>
</dbReference>
<dbReference type="PROSITE" id="PS00632">
    <property type="entry name" value="RIBOSOMAL_S4"/>
    <property type="match status" value="1"/>
</dbReference>
<dbReference type="PROSITE" id="PS50889">
    <property type="entry name" value="S4"/>
    <property type="match status" value="1"/>
</dbReference>
<gene>
    <name evidence="1" type="primary">rpsD</name>
    <name type="ordered locus">Rmet_3292</name>
</gene>
<proteinExistence type="inferred from homology"/>
<accession>Q1LI62</accession>